<protein>
    <recommendedName>
        <fullName>Hypoxia-inducible factor 1-alpha inhibitor</fullName>
        <ecNumber>1.14.11.30</ecNumber>
        <ecNumber>1.14.11.n4</ecNumber>
    </recommendedName>
    <alternativeName>
        <fullName>Factor inhibiting HIF-1</fullName>
        <shortName>FIH-1</shortName>
    </alternativeName>
    <alternativeName>
        <fullName>Hypoxia-inducible factor asparagine hydroxylase</fullName>
    </alternativeName>
</protein>
<organism>
    <name type="scientific">Homo sapiens</name>
    <name type="common">Human</name>
    <dbReference type="NCBI Taxonomy" id="9606"/>
    <lineage>
        <taxon>Eukaryota</taxon>
        <taxon>Metazoa</taxon>
        <taxon>Chordata</taxon>
        <taxon>Craniata</taxon>
        <taxon>Vertebrata</taxon>
        <taxon>Euteleostomi</taxon>
        <taxon>Mammalia</taxon>
        <taxon>Eutheria</taxon>
        <taxon>Euarchontoglires</taxon>
        <taxon>Primates</taxon>
        <taxon>Haplorrhini</taxon>
        <taxon>Catarrhini</taxon>
        <taxon>Hominidae</taxon>
        <taxon>Homo</taxon>
    </lineage>
</organism>
<gene>
    <name type="primary">HIF1AN</name>
    <name type="synonym">FIH1</name>
</gene>
<accession>Q9NWT6</accession>
<accession>D3DR69</accession>
<accession>Q5W147</accession>
<accession>Q969Q7</accession>
<accession>Q9NPV5</accession>
<feature type="initiator methionine" description="Removed" evidence="29 30 31">
    <location>
        <position position="1"/>
    </location>
</feature>
<feature type="chain" id="PRO_0000083974" description="Hypoxia-inducible factor 1-alpha inhibitor">
    <location>
        <begin position="2"/>
        <end position="349"/>
    </location>
</feature>
<feature type="domain" description="JmjC" evidence="2">
    <location>
        <begin position="142"/>
        <end position="312"/>
    </location>
</feature>
<feature type="region of interest" description="Disordered" evidence="3">
    <location>
        <begin position="1"/>
        <end position="51"/>
    </location>
</feature>
<feature type="region of interest" description="Interaction with VHL" evidence="4">
    <location>
        <begin position="2"/>
        <end position="125"/>
    </location>
</feature>
<feature type="compositionally biased region" description="Low complexity" evidence="3">
    <location>
        <begin position="1"/>
        <end position="10"/>
    </location>
</feature>
<feature type="binding site" evidence="7 8 23">
    <location>
        <position position="145"/>
    </location>
    <ligand>
        <name>2-oxoglutarate</name>
        <dbReference type="ChEBI" id="CHEBI:16810"/>
    </ligand>
</feature>
<feature type="binding site" evidence="22">
    <location>
        <position position="152"/>
    </location>
    <ligand>
        <name>substrate</name>
    </ligand>
</feature>
<feature type="binding site" evidence="22">
    <location>
        <begin position="181"/>
        <end position="183"/>
    </location>
    <ligand>
        <name>substrate</name>
    </ligand>
</feature>
<feature type="binding site" evidence="7 8 23">
    <location>
        <position position="196"/>
    </location>
    <ligand>
        <name>2-oxoglutarate</name>
        <dbReference type="ChEBI" id="CHEBI:16810"/>
    </ligand>
</feature>
<feature type="binding site" evidence="7 8 12 14 20 21 23 24">
    <location>
        <position position="199"/>
    </location>
    <ligand>
        <name>Fe cation</name>
        <dbReference type="ChEBI" id="CHEBI:24875"/>
        <note>catalytic</note>
    </ligand>
</feature>
<feature type="binding site" evidence="22">
    <location>
        <begin position="201"/>
        <end position="203"/>
    </location>
    <ligand>
        <name>substrate</name>
    </ligand>
</feature>
<feature type="binding site" evidence="7 8 12 14 20 21 23 24">
    <location>
        <position position="201"/>
    </location>
    <ligand>
        <name>Fe cation</name>
        <dbReference type="ChEBI" id="CHEBI:24875"/>
        <note>catalytic</note>
    </ligand>
</feature>
<feature type="binding site" evidence="7 8 23">
    <location>
        <position position="205"/>
    </location>
    <ligand>
        <name>2-oxoglutarate</name>
        <dbReference type="ChEBI" id="CHEBI:16810"/>
    </ligand>
</feature>
<feature type="binding site" evidence="7 8 23">
    <location>
        <position position="214"/>
    </location>
    <ligand>
        <name>2-oxoglutarate</name>
        <dbReference type="ChEBI" id="CHEBI:16810"/>
    </ligand>
</feature>
<feature type="binding site" evidence="22">
    <location>
        <begin position="238"/>
        <end position="239"/>
    </location>
    <ligand>
        <name>substrate</name>
    </ligand>
</feature>
<feature type="binding site" evidence="7 8 12 14 20 21 23 24">
    <location>
        <position position="279"/>
    </location>
    <ligand>
        <name>Fe cation</name>
        <dbReference type="ChEBI" id="CHEBI:24875"/>
        <note>catalytic</note>
    </ligand>
</feature>
<feature type="binding site" evidence="7 8 23">
    <location>
        <position position="294"/>
    </location>
    <ligand>
        <name>2-oxoglutarate</name>
        <dbReference type="ChEBI" id="CHEBI:16810"/>
    </ligand>
</feature>
<feature type="binding site" evidence="22">
    <location>
        <position position="300"/>
    </location>
    <ligand>
        <name>substrate</name>
    </ligand>
</feature>
<feature type="binding site" evidence="22">
    <location>
        <position position="321"/>
    </location>
    <ligand>
        <name>substrate</name>
    </ligand>
</feature>
<feature type="site" description="Important for dimer formation">
    <location>
        <position position="340"/>
    </location>
</feature>
<feature type="modified residue" description="N-acetylalanine" evidence="29 30 31">
    <location>
        <position position="2"/>
    </location>
</feature>
<feature type="sequence variant" id="VAR_051028" description="In dbSNP:rs2295778." evidence="27">
    <original>P</original>
    <variation>A</variation>
    <location>
        <position position="41"/>
    </location>
</feature>
<feature type="mutagenesis site" description="Prevents suppression of HIF CAD activity. Strongly stimulates 2-oxoglutarate turnover. No stimulation of 2-oxoglutarate turnover; when associated with R-340." evidence="6">
    <original>H</original>
    <variation>A</variation>
    <location>
        <position position="199"/>
    </location>
</feature>
<feature type="mutagenesis site" description="Prevents suppression of HIF CAD activity." evidence="6 17 22">
    <original>D</original>
    <variation>A</variation>
    <location>
        <position position="201"/>
    </location>
</feature>
<feature type="mutagenesis site" description="Loss of HIF1A Asn hydroxylation activity. Slightly stimulates 2-oxoglutarate turnover." evidence="6 17 22">
    <original>D</original>
    <variation>E</variation>
    <location>
        <position position="201"/>
    </location>
</feature>
<feature type="mutagenesis site" description="No impact on HIF1A Asn hydroxylation activity. Loss of Asp hydroxylation ability. Strongly stimulates 2-oxoglutarate turnover. Loss of HIF1A Asn hydroxylation activity and slight stimulation of 2-oxoglutarate turnover; when associated with R-296." evidence="6 17 22">
    <original>D</original>
    <variation>G</variation>
    <location>
        <position position="201"/>
    </location>
</feature>
<feature type="mutagenesis site" description="No effect on Asp hydroxylation ability." evidence="22">
    <original>Q</original>
    <variation>H</variation>
    <location>
        <position position="239"/>
    </location>
</feature>
<feature type="mutagenesis site" description="Loss of HIF1A Asn hydroxylation activity and slight stimulation of 2-oxoglutarate turnover; when associated with G-201." evidence="17">
    <original>W</original>
    <variation>R</variation>
    <location>
        <position position="296"/>
    </location>
</feature>
<feature type="mutagenesis site" description="Impairs dimer formation, leading to loss of HIF1A Asn hydroxylation activity. No stimulation of 2-oxoglutarate turnover; when associated with A-201." evidence="11 17">
    <original>L</original>
    <variation>R</variation>
    <location>
        <position position="340"/>
    </location>
</feature>
<feature type="mutagenesis site" description="No effect on dimer formation and HIF1A Asn hydroxylation activity." evidence="11">
    <original>I</original>
    <variation>R</variation>
    <location>
        <position position="344"/>
    </location>
</feature>
<feature type="sequence conflict" description="In Ref. 2; BAA91291." evidence="28" ref="2">
    <original>A</original>
    <variation>T</variation>
    <location>
        <position position="10"/>
    </location>
</feature>
<feature type="sequence conflict" description="In Ref. 2; BAA91291." evidence="28" ref="2">
    <original>D</original>
    <variation>H</variation>
    <location>
        <position position="28"/>
    </location>
</feature>
<feature type="sequence conflict" description="In Ref. 2; BAA91291." evidence="28" ref="2">
    <original>R</original>
    <variation>G</variation>
    <location>
        <position position="156"/>
    </location>
</feature>
<feature type="helix" evidence="33">
    <location>
        <begin position="2"/>
        <end position="9"/>
    </location>
</feature>
<feature type="helix" evidence="39">
    <location>
        <begin position="20"/>
        <end position="22"/>
    </location>
</feature>
<feature type="strand" evidence="38">
    <location>
        <begin position="24"/>
        <end position="26"/>
    </location>
</feature>
<feature type="helix" evidence="39">
    <location>
        <begin position="29"/>
        <end position="31"/>
    </location>
</feature>
<feature type="strand" evidence="39">
    <location>
        <begin position="39"/>
        <end position="41"/>
    </location>
</feature>
<feature type="helix" evidence="39">
    <location>
        <begin position="50"/>
        <end position="57"/>
    </location>
</feature>
<feature type="strand" evidence="39">
    <location>
        <begin position="62"/>
        <end position="65"/>
    </location>
</feature>
<feature type="helix" evidence="39">
    <location>
        <begin position="71"/>
        <end position="75"/>
    </location>
</feature>
<feature type="helix" evidence="39">
    <location>
        <begin position="78"/>
        <end position="84"/>
    </location>
</feature>
<feature type="strand" evidence="35">
    <location>
        <begin position="85"/>
        <end position="88"/>
    </location>
</feature>
<feature type="strand" evidence="39">
    <location>
        <begin position="90"/>
        <end position="99"/>
    </location>
</feature>
<feature type="helix" evidence="39">
    <location>
        <begin position="105"/>
        <end position="110"/>
    </location>
</feature>
<feature type="strand" evidence="34">
    <location>
        <begin position="111"/>
        <end position="113"/>
    </location>
</feature>
<feature type="strand" evidence="39">
    <location>
        <begin position="117"/>
        <end position="123"/>
    </location>
</feature>
<feature type="helix" evidence="39">
    <location>
        <begin position="125"/>
        <end position="138"/>
    </location>
</feature>
<feature type="strand" evidence="39">
    <location>
        <begin position="143"/>
        <end position="149"/>
    </location>
</feature>
<feature type="strand" evidence="32">
    <location>
        <begin position="151"/>
        <end position="154"/>
    </location>
</feature>
<feature type="helix" evidence="39">
    <location>
        <begin position="156"/>
        <end position="163"/>
    </location>
</feature>
<feature type="helix" evidence="39">
    <location>
        <begin position="167"/>
        <end position="177"/>
    </location>
</feature>
<feature type="strand" evidence="39">
    <location>
        <begin position="182"/>
        <end position="184"/>
    </location>
</feature>
<feature type="strand" evidence="39">
    <location>
        <begin position="186"/>
        <end position="190"/>
    </location>
</feature>
<feature type="strand" evidence="39">
    <location>
        <begin position="195"/>
        <end position="199"/>
    </location>
</feature>
<feature type="strand" evidence="39">
    <location>
        <begin position="202"/>
        <end position="212"/>
    </location>
</feature>
<feature type="strand" evidence="39">
    <location>
        <begin position="214"/>
        <end position="219"/>
    </location>
</feature>
<feature type="helix" evidence="39">
    <location>
        <begin position="221"/>
        <end position="223"/>
    </location>
</feature>
<feature type="helix" evidence="39">
    <location>
        <begin position="224"/>
        <end position="227"/>
    </location>
</feature>
<feature type="turn" evidence="38">
    <location>
        <begin position="235"/>
        <end position="238"/>
    </location>
</feature>
<feature type="strand" evidence="36">
    <location>
        <begin position="239"/>
        <end position="242"/>
    </location>
</feature>
<feature type="strand" evidence="37">
    <location>
        <begin position="244"/>
        <end position="246"/>
    </location>
</feature>
<feature type="turn" evidence="39">
    <location>
        <begin position="249"/>
        <end position="251"/>
    </location>
</feature>
<feature type="helix" evidence="39">
    <location>
        <begin position="253"/>
        <end position="257"/>
    </location>
</feature>
<feature type="strand" evidence="39">
    <location>
        <begin position="260"/>
        <end position="265"/>
    </location>
</feature>
<feature type="strand" evidence="39">
    <location>
        <begin position="270"/>
        <end position="273"/>
    </location>
</feature>
<feature type="strand" evidence="39">
    <location>
        <begin position="278"/>
        <end position="283"/>
    </location>
</feature>
<feature type="strand" evidence="39">
    <location>
        <begin position="290"/>
        <end position="297"/>
    </location>
</feature>
<feature type="helix" evidence="39">
    <location>
        <begin position="312"/>
        <end position="330"/>
    </location>
</feature>
<feature type="helix" evidence="39">
    <location>
        <begin position="333"/>
        <end position="335"/>
    </location>
</feature>
<feature type="helix" evidence="39">
    <location>
        <begin position="336"/>
        <end position="344"/>
    </location>
</feature>
<feature type="turn" evidence="39">
    <location>
        <begin position="345"/>
        <end position="347"/>
    </location>
</feature>
<reference key="1">
    <citation type="journal article" date="2001" name="Genes Dev.">
        <title>FIH-1: a novel protein that interacts with HIF-1alpha and VHL to mediate repression of HIF-1 transcriptional activity.</title>
        <authorList>
            <person name="Mahon P.C."/>
            <person name="Hirota K."/>
            <person name="Semenza G.L."/>
        </authorList>
    </citation>
    <scope>NUCLEOTIDE SEQUENCE [MRNA]</scope>
    <scope>INTERACTION WITH HIF1A; VHL AND HISTONE DEACETYLASES</scope>
    <source>
        <tissue>Brain</tissue>
    </source>
</reference>
<reference key="2">
    <citation type="journal article" date="2004" name="Nat. Genet.">
        <title>Complete sequencing and characterization of 21,243 full-length human cDNAs.</title>
        <authorList>
            <person name="Ota T."/>
            <person name="Suzuki Y."/>
            <person name="Nishikawa T."/>
            <person name="Otsuki T."/>
            <person name="Sugiyama T."/>
            <person name="Irie R."/>
            <person name="Wakamatsu A."/>
            <person name="Hayashi K."/>
            <person name="Sato H."/>
            <person name="Nagai K."/>
            <person name="Kimura K."/>
            <person name="Makita H."/>
            <person name="Sekine M."/>
            <person name="Obayashi M."/>
            <person name="Nishi T."/>
            <person name="Shibahara T."/>
            <person name="Tanaka T."/>
            <person name="Ishii S."/>
            <person name="Yamamoto J."/>
            <person name="Saito K."/>
            <person name="Kawai Y."/>
            <person name="Isono Y."/>
            <person name="Nakamura Y."/>
            <person name="Nagahari K."/>
            <person name="Murakami K."/>
            <person name="Yasuda T."/>
            <person name="Iwayanagi T."/>
            <person name="Wagatsuma M."/>
            <person name="Shiratori A."/>
            <person name="Sudo H."/>
            <person name="Hosoiri T."/>
            <person name="Kaku Y."/>
            <person name="Kodaira H."/>
            <person name="Kondo H."/>
            <person name="Sugawara M."/>
            <person name="Takahashi M."/>
            <person name="Kanda K."/>
            <person name="Yokoi T."/>
            <person name="Furuya T."/>
            <person name="Kikkawa E."/>
            <person name="Omura Y."/>
            <person name="Abe K."/>
            <person name="Kamihara K."/>
            <person name="Katsuta N."/>
            <person name="Sato K."/>
            <person name="Tanikawa M."/>
            <person name="Yamazaki M."/>
            <person name="Ninomiya K."/>
            <person name="Ishibashi T."/>
            <person name="Yamashita H."/>
            <person name="Murakawa K."/>
            <person name="Fujimori K."/>
            <person name="Tanai H."/>
            <person name="Kimata M."/>
            <person name="Watanabe M."/>
            <person name="Hiraoka S."/>
            <person name="Chiba Y."/>
            <person name="Ishida S."/>
            <person name="Ono Y."/>
            <person name="Takiguchi S."/>
            <person name="Watanabe S."/>
            <person name="Yosida M."/>
            <person name="Hotuta T."/>
            <person name="Kusano J."/>
            <person name="Kanehori K."/>
            <person name="Takahashi-Fujii A."/>
            <person name="Hara H."/>
            <person name="Tanase T.-O."/>
            <person name="Nomura Y."/>
            <person name="Togiya S."/>
            <person name="Komai F."/>
            <person name="Hara R."/>
            <person name="Takeuchi K."/>
            <person name="Arita M."/>
            <person name="Imose N."/>
            <person name="Musashino K."/>
            <person name="Yuuki H."/>
            <person name="Oshima A."/>
            <person name="Sasaki N."/>
            <person name="Aotsuka S."/>
            <person name="Yoshikawa Y."/>
            <person name="Matsunawa H."/>
            <person name="Ichihara T."/>
            <person name="Shiohata N."/>
            <person name="Sano S."/>
            <person name="Moriya S."/>
            <person name="Momiyama H."/>
            <person name="Satoh N."/>
            <person name="Takami S."/>
            <person name="Terashima Y."/>
            <person name="Suzuki O."/>
            <person name="Nakagawa S."/>
            <person name="Senoh A."/>
            <person name="Mizoguchi H."/>
            <person name="Goto Y."/>
            <person name="Shimizu F."/>
            <person name="Wakebe H."/>
            <person name="Hishigaki H."/>
            <person name="Watanabe T."/>
            <person name="Sugiyama A."/>
            <person name="Takemoto M."/>
            <person name="Kawakami B."/>
            <person name="Yamazaki M."/>
            <person name="Watanabe K."/>
            <person name="Kumagai A."/>
            <person name="Itakura S."/>
            <person name="Fukuzumi Y."/>
            <person name="Fujimori Y."/>
            <person name="Komiyama M."/>
            <person name="Tashiro H."/>
            <person name="Tanigami A."/>
            <person name="Fujiwara T."/>
            <person name="Ono T."/>
            <person name="Yamada K."/>
            <person name="Fujii Y."/>
            <person name="Ozaki K."/>
            <person name="Hirao M."/>
            <person name="Ohmori Y."/>
            <person name="Kawabata A."/>
            <person name="Hikiji T."/>
            <person name="Kobatake N."/>
            <person name="Inagaki H."/>
            <person name="Ikema Y."/>
            <person name="Okamoto S."/>
            <person name="Okitani R."/>
            <person name="Kawakami T."/>
            <person name="Noguchi S."/>
            <person name="Itoh T."/>
            <person name="Shigeta K."/>
            <person name="Senba T."/>
            <person name="Matsumura K."/>
            <person name="Nakajima Y."/>
            <person name="Mizuno T."/>
            <person name="Morinaga M."/>
            <person name="Sasaki M."/>
            <person name="Togashi T."/>
            <person name="Oyama M."/>
            <person name="Hata H."/>
            <person name="Watanabe M."/>
            <person name="Komatsu T."/>
            <person name="Mizushima-Sugano J."/>
            <person name="Satoh T."/>
            <person name="Shirai Y."/>
            <person name="Takahashi Y."/>
            <person name="Nakagawa K."/>
            <person name="Okumura K."/>
            <person name="Nagase T."/>
            <person name="Nomura N."/>
            <person name="Kikuchi H."/>
            <person name="Masuho Y."/>
            <person name="Yamashita R."/>
            <person name="Nakai K."/>
            <person name="Yada T."/>
            <person name="Nakamura Y."/>
            <person name="Ohara O."/>
            <person name="Isogai T."/>
            <person name="Sugano S."/>
        </authorList>
    </citation>
    <scope>NUCLEOTIDE SEQUENCE [LARGE SCALE MRNA]</scope>
    <source>
        <tissue>Signet-ring cell carcinoma</tissue>
    </source>
</reference>
<reference key="3">
    <citation type="journal article" date="2004" name="Nature">
        <title>The DNA sequence and comparative analysis of human chromosome 10.</title>
        <authorList>
            <person name="Deloukas P."/>
            <person name="Earthrowl M.E."/>
            <person name="Grafham D.V."/>
            <person name="Rubenfield M."/>
            <person name="French L."/>
            <person name="Steward C.A."/>
            <person name="Sims S.K."/>
            <person name="Jones M.C."/>
            <person name="Searle S."/>
            <person name="Scott C."/>
            <person name="Howe K."/>
            <person name="Hunt S.E."/>
            <person name="Andrews T.D."/>
            <person name="Gilbert J.G.R."/>
            <person name="Swarbreck D."/>
            <person name="Ashurst J.L."/>
            <person name="Taylor A."/>
            <person name="Battles J."/>
            <person name="Bird C.P."/>
            <person name="Ainscough R."/>
            <person name="Almeida J.P."/>
            <person name="Ashwell R.I.S."/>
            <person name="Ambrose K.D."/>
            <person name="Babbage A.K."/>
            <person name="Bagguley C.L."/>
            <person name="Bailey J."/>
            <person name="Banerjee R."/>
            <person name="Bates K."/>
            <person name="Beasley H."/>
            <person name="Bray-Allen S."/>
            <person name="Brown A.J."/>
            <person name="Brown J.Y."/>
            <person name="Burford D.C."/>
            <person name="Burrill W."/>
            <person name="Burton J."/>
            <person name="Cahill P."/>
            <person name="Camire D."/>
            <person name="Carter N.P."/>
            <person name="Chapman J.C."/>
            <person name="Clark S.Y."/>
            <person name="Clarke G."/>
            <person name="Clee C.M."/>
            <person name="Clegg S."/>
            <person name="Corby N."/>
            <person name="Coulson A."/>
            <person name="Dhami P."/>
            <person name="Dutta I."/>
            <person name="Dunn M."/>
            <person name="Faulkner L."/>
            <person name="Frankish A."/>
            <person name="Frankland J.A."/>
            <person name="Garner P."/>
            <person name="Garnett J."/>
            <person name="Gribble S."/>
            <person name="Griffiths C."/>
            <person name="Grocock R."/>
            <person name="Gustafson E."/>
            <person name="Hammond S."/>
            <person name="Harley J.L."/>
            <person name="Hart E."/>
            <person name="Heath P.D."/>
            <person name="Ho T.P."/>
            <person name="Hopkins B."/>
            <person name="Horne J."/>
            <person name="Howden P.J."/>
            <person name="Huckle E."/>
            <person name="Hynds C."/>
            <person name="Johnson C."/>
            <person name="Johnson D."/>
            <person name="Kana A."/>
            <person name="Kay M."/>
            <person name="Kimberley A.M."/>
            <person name="Kershaw J.K."/>
            <person name="Kokkinaki M."/>
            <person name="Laird G.K."/>
            <person name="Lawlor S."/>
            <person name="Lee H.M."/>
            <person name="Leongamornlert D.A."/>
            <person name="Laird G."/>
            <person name="Lloyd C."/>
            <person name="Lloyd D.M."/>
            <person name="Loveland J."/>
            <person name="Lovell J."/>
            <person name="McLaren S."/>
            <person name="McLay K.E."/>
            <person name="McMurray A."/>
            <person name="Mashreghi-Mohammadi M."/>
            <person name="Matthews L."/>
            <person name="Milne S."/>
            <person name="Nickerson T."/>
            <person name="Nguyen M."/>
            <person name="Overton-Larty E."/>
            <person name="Palmer S.A."/>
            <person name="Pearce A.V."/>
            <person name="Peck A.I."/>
            <person name="Pelan S."/>
            <person name="Phillimore B."/>
            <person name="Porter K."/>
            <person name="Rice C.M."/>
            <person name="Rogosin A."/>
            <person name="Ross M.T."/>
            <person name="Sarafidou T."/>
            <person name="Sehra H.K."/>
            <person name="Shownkeen R."/>
            <person name="Skuce C.D."/>
            <person name="Smith M."/>
            <person name="Standring L."/>
            <person name="Sycamore N."/>
            <person name="Tester J."/>
            <person name="Thorpe A."/>
            <person name="Torcasso W."/>
            <person name="Tracey A."/>
            <person name="Tromans A."/>
            <person name="Tsolas J."/>
            <person name="Wall M."/>
            <person name="Walsh J."/>
            <person name="Wang H."/>
            <person name="Weinstock K."/>
            <person name="West A.P."/>
            <person name="Willey D.L."/>
            <person name="Whitehead S.L."/>
            <person name="Wilming L."/>
            <person name="Wray P.W."/>
            <person name="Young L."/>
            <person name="Chen Y."/>
            <person name="Lovering R.C."/>
            <person name="Moschonas N.K."/>
            <person name="Siebert R."/>
            <person name="Fechtel K."/>
            <person name="Bentley D."/>
            <person name="Durbin R.M."/>
            <person name="Hubbard T."/>
            <person name="Doucette-Stamm L."/>
            <person name="Beck S."/>
            <person name="Smith D.R."/>
            <person name="Rogers J."/>
        </authorList>
    </citation>
    <scope>NUCLEOTIDE SEQUENCE [LARGE SCALE GENOMIC DNA]</scope>
</reference>
<reference key="4">
    <citation type="submission" date="2005-09" db="EMBL/GenBank/DDBJ databases">
        <authorList>
            <person name="Mural R.J."/>
            <person name="Istrail S."/>
            <person name="Sutton G.G."/>
            <person name="Florea L."/>
            <person name="Halpern A.L."/>
            <person name="Mobarry C.M."/>
            <person name="Lippert R."/>
            <person name="Walenz B."/>
            <person name="Shatkay H."/>
            <person name="Dew I."/>
            <person name="Miller J.R."/>
            <person name="Flanigan M.J."/>
            <person name="Edwards N.J."/>
            <person name="Bolanos R."/>
            <person name="Fasulo D."/>
            <person name="Halldorsson B.V."/>
            <person name="Hannenhalli S."/>
            <person name="Turner R."/>
            <person name="Yooseph S."/>
            <person name="Lu F."/>
            <person name="Nusskern D.R."/>
            <person name="Shue B.C."/>
            <person name="Zheng X.H."/>
            <person name="Zhong F."/>
            <person name="Delcher A.L."/>
            <person name="Huson D.H."/>
            <person name="Kravitz S.A."/>
            <person name="Mouchard L."/>
            <person name="Reinert K."/>
            <person name="Remington K.A."/>
            <person name="Clark A.G."/>
            <person name="Waterman M.S."/>
            <person name="Eichler E.E."/>
            <person name="Adams M.D."/>
            <person name="Hunkapiller M.W."/>
            <person name="Myers E.W."/>
            <person name="Venter J.C."/>
        </authorList>
    </citation>
    <scope>NUCLEOTIDE SEQUENCE [LARGE SCALE GENOMIC DNA]</scope>
    <scope>VARIANT ALA-41</scope>
</reference>
<reference key="5">
    <citation type="journal article" date="2004" name="Genome Res.">
        <title>The status, quality, and expansion of the NIH full-length cDNA project: the Mammalian Gene Collection (MGC).</title>
        <authorList>
            <consortium name="The MGC Project Team"/>
        </authorList>
    </citation>
    <scope>NUCLEOTIDE SEQUENCE [LARGE SCALE MRNA]</scope>
    <source>
        <tissue>Muscle</tissue>
    </source>
</reference>
<reference key="6">
    <citation type="journal article" date="2007" name="BMC Genomics">
        <title>The full-ORF clone resource of the German cDNA consortium.</title>
        <authorList>
            <person name="Bechtel S."/>
            <person name="Rosenfelder H."/>
            <person name="Duda A."/>
            <person name="Schmidt C.P."/>
            <person name="Ernst U."/>
            <person name="Wellenreuther R."/>
            <person name="Mehrle A."/>
            <person name="Schuster C."/>
            <person name="Bahr A."/>
            <person name="Bloecker H."/>
            <person name="Heubner D."/>
            <person name="Hoerlein A."/>
            <person name="Michel G."/>
            <person name="Wedler H."/>
            <person name="Koehrer K."/>
            <person name="Ottenwaelder B."/>
            <person name="Poustka A."/>
            <person name="Wiemann S."/>
            <person name="Schupp I."/>
        </authorList>
    </citation>
    <scope>NUCLEOTIDE SEQUENCE [LARGE SCALE MRNA] OF 89-349</scope>
    <source>
        <tissue>Melanoma</tissue>
    </source>
</reference>
<reference key="7">
    <citation type="journal article" date="2002" name="Genes Dev.">
        <title>FIH-1 is an asparaginyl hydroxylase enzyme that regulates the transcriptional activity of hypoxia-inducible factor.</title>
        <authorList>
            <person name="Lando D."/>
            <person name="Peet D.J."/>
            <person name="Gorman J.J."/>
            <person name="Whelan D.A."/>
            <person name="Whitelaw M.L."/>
            <person name="Bruick R.K."/>
        </authorList>
    </citation>
    <scope>CATALYTIC ACTIVITY</scope>
    <scope>FUNCTION</scope>
    <scope>MUTAGENESIS OF HIS-199 AND ASP-201</scope>
</reference>
<reference key="8">
    <citation type="journal article" date="2002" name="J. Biol. Chem.">
        <title>Hypoxia-inducible factor (HIF) asparagine hydroxylase is identical to factor inhibiting HIF (FIH) and is related to the cupin structural family.</title>
        <authorList>
            <person name="Hewitson K.S."/>
            <person name="McNeill L.A."/>
            <person name="Riordan M.V."/>
            <person name="Tian Y.-M."/>
            <person name="Bullock A.N."/>
            <person name="Welford R.W."/>
            <person name="Elkins J.M."/>
            <person name="Oldham N.J."/>
            <person name="Bhattacharya S."/>
            <person name="Gleadle J.M."/>
            <person name="Ratcliffe P.J."/>
            <person name="Pugh C.W."/>
            <person name="Schofield C.J."/>
        </authorList>
    </citation>
    <scope>CATALYTIC ACTIVITY</scope>
    <scope>FUNCTION</scope>
</reference>
<reference key="9">
    <citation type="journal article" date="2004" name="Biochem. J.">
        <title>Disruption of dimerization and substrate phosphorylation inhibit factor inhibiting hypoxia-inducible factor (FIH) activity.</title>
        <authorList>
            <person name="Lancaster D.E."/>
            <person name="McNeill L.A."/>
            <person name="McDonough M.A."/>
            <person name="Aplin R.T."/>
            <person name="Hewitson K.S."/>
            <person name="Pugh C.W."/>
            <person name="Ratcliffe P.J."/>
            <person name="Schofield C.J."/>
        </authorList>
    </citation>
    <scope>DIMERIZATION</scope>
    <scope>MASS SPECTROMETRY</scope>
    <scope>MUTAGENESIS OF LEU-340 AND ILE-344</scope>
</reference>
<reference key="10">
    <citation type="journal article" date="2004" name="J. Biol. Chem.">
        <title>Catalytic properties of the asparaginyl hydroxylase (FIH) in the oxygen sensing pathway are distinct from those of its prolyl 4-hydroxylases.</title>
        <authorList>
            <person name="Koivunen P."/>
            <person name="Hirsila M."/>
            <person name="Gunzler V."/>
            <person name="Kivirikko K.I."/>
            <person name="Myllyharju J."/>
        </authorList>
    </citation>
    <scope>CATALYTIC ACTIVITY</scope>
    <scope>SUBUNIT</scope>
    <scope>BIOPHYSICOCHEMICAL PROPERTIES</scope>
</reference>
<reference key="11">
    <citation type="journal article" date="2004" name="J. Biol. Chem.">
        <title>Substrate requirements of the oxygen-sensing asparaginyl hydroxylase factor-inhibiting hypoxia-inducible factor.</title>
        <authorList>
            <person name="Linke S."/>
            <person name="Stojkoski C."/>
            <person name="Kewley R.J."/>
            <person name="Booker G.W."/>
            <person name="Whitelaw M.L."/>
            <person name="Peet D.J."/>
        </authorList>
    </citation>
    <scope>SUBCELLULAR LOCATION</scope>
</reference>
<reference key="12">
    <citation type="journal article" date="2006" name="Proc. Natl. Acad. Sci. U.S.A.">
        <title>Posttranslational hydroxylation of ankyrin repeats in IkappaB proteins by the hypoxia-inducible factor (HIF) asparaginyl hydroxylase, factor inhibiting HIF (FIH).</title>
        <authorList>
            <person name="Cockman M.E."/>
            <person name="Lancaster D.E."/>
            <person name="Stolze I.P."/>
            <person name="Hewitson K.S."/>
            <person name="McDonough M.A."/>
            <person name="Coleman M.L."/>
            <person name="Coles C.H."/>
            <person name="Yu X."/>
            <person name="Hay R.T."/>
            <person name="Ley S.C."/>
            <person name="Pugh C.W."/>
            <person name="Oldham N.J."/>
            <person name="Masson N."/>
            <person name="Schofield C.J."/>
            <person name="Ratcliffe P.J."/>
        </authorList>
    </citation>
    <scope>FUNCTION</scope>
    <scope>INTERACTION WITH NFKB1 AND NFKBIA</scope>
    <scope>CATALYTIC ACTIVITY</scope>
</reference>
<reference key="13">
    <citation type="journal article" date="2008" name="Proc. Natl. Acad. Sci. U.S.A.">
        <title>Interaction with factor inhibiting HIF-1 defines an additional mode of cross-coupling between the Notch and hypoxia signaling pathways.</title>
        <authorList>
            <person name="Zheng X."/>
            <person name="Linke S."/>
            <person name="Dias J.M."/>
            <person name="Zheng X."/>
            <person name="Gradin K."/>
            <person name="Wallis T.P."/>
            <person name="Hamilton B.R."/>
            <person name="Gustafsson M."/>
            <person name="Ruas J.L."/>
            <person name="Wilkins S."/>
            <person name="Bilton R.L."/>
            <person name="Brismar K."/>
            <person name="Whitelaw M.L."/>
            <person name="Pereira T."/>
            <person name="Gorman J.J."/>
            <person name="Ericson J."/>
            <person name="Peet D.J."/>
            <person name="Lendahl U."/>
            <person name="Poellinger L."/>
        </authorList>
    </citation>
    <scope>FUNCTION</scope>
    <scope>SUBCELLULAR LOCATION</scope>
    <scope>CATALYTIC ACTIVITY</scope>
</reference>
<reference key="14">
    <citation type="journal article" date="2009" name="Anal. Chem.">
        <title>Lys-N and trypsin cover complementary parts of the phosphoproteome in a refined SCX-based approach.</title>
        <authorList>
            <person name="Gauci S."/>
            <person name="Helbig A.O."/>
            <person name="Slijper M."/>
            <person name="Krijgsveld J."/>
            <person name="Heck A.J."/>
            <person name="Mohammed S."/>
        </authorList>
    </citation>
    <scope>ACETYLATION [LARGE SCALE ANALYSIS] AT ALA-2</scope>
    <scope>CLEAVAGE OF INITIATOR METHIONINE [LARGE SCALE ANALYSIS]</scope>
    <scope>IDENTIFICATION BY MASS SPECTROMETRY [LARGE SCALE ANALYSIS]</scope>
</reference>
<reference key="15">
    <citation type="journal article" date="2009" name="Biochem. J.">
        <title>MYPT1, the targeting subunit of smooth-muscle myosin phosphatase, is a substrate for the asparaginyl hydroxylase factor inhibiting hypoxia-inducible factor (FIH).</title>
        <authorList>
            <person name="Webb J.D."/>
            <person name="Muranyi A."/>
            <person name="Pugh C.W."/>
            <person name="Ratcliffe P.J."/>
            <person name="Coleman M.L."/>
        </authorList>
    </citation>
    <scope>FUNCTION</scope>
    <scope>INTERACTION WITH PPP1R12A</scope>
    <scope>CATALYTIC ACTIVITY</scope>
</reference>
<reference key="16">
    <citation type="journal article" date="2009" name="J. Biol. Chem.">
        <title>Mint3 enhances the activity of hypoxia-inducible factor-1 (HIF-1) in macrophages by suppressing the activity of factor inhibiting HIF-1.</title>
        <authorList>
            <person name="Sakamoto T."/>
            <person name="Seiki M."/>
        </authorList>
    </citation>
    <scope>INTERACTION WITH APBA3</scope>
    <scope>SUBCELLULAR LOCATION</scope>
</reference>
<reference key="17">
    <citation type="journal article" date="2011" name="BMC Syst. Biol.">
        <title>Initial characterization of the human central proteome.</title>
        <authorList>
            <person name="Burkard T.R."/>
            <person name="Planyavsky M."/>
            <person name="Kaupe I."/>
            <person name="Breitwieser F.P."/>
            <person name="Buerckstuemmer T."/>
            <person name="Bennett K.L."/>
            <person name="Superti-Furga G."/>
            <person name="Colinge J."/>
        </authorList>
    </citation>
    <scope>IDENTIFICATION BY MASS SPECTROMETRY [LARGE SCALE ANALYSIS]</scope>
</reference>
<reference key="18">
    <citation type="journal article" date="2012" name="Mol. Cell. Biol.">
        <title>Identification and proteomic analysis of distinct UBE3A/E6AP protein complexes.</title>
        <authorList>
            <person name="Martinez-Noel G."/>
            <person name="Galligan J.T."/>
            <person name="Sowa M.E."/>
            <person name="Arndt V."/>
            <person name="Overton T.M."/>
            <person name="Harper J.W."/>
            <person name="Howley P.M."/>
        </authorList>
    </citation>
    <scope>INTERACTION WITH UBE3A</scope>
</reference>
<reference key="19">
    <citation type="journal article" date="2012" name="Mol. Cell. Proteomics">
        <title>Comparative large-scale characterisation of plant vs. mammal proteins reveals similar and idiosyncratic N-alpha acetylation features.</title>
        <authorList>
            <person name="Bienvenut W.V."/>
            <person name="Sumpton D."/>
            <person name="Martinez A."/>
            <person name="Lilla S."/>
            <person name="Espagne C."/>
            <person name="Meinnel T."/>
            <person name="Giglione C."/>
        </authorList>
    </citation>
    <scope>ACETYLATION [LARGE SCALE ANALYSIS] AT ALA-2</scope>
    <scope>CLEAVAGE OF INITIATOR METHIONINE [LARGE SCALE ANALYSIS]</scope>
    <scope>IDENTIFICATION BY MASS SPECTROMETRY [LARGE SCALE ANALYSIS]</scope>
</reference>
<reference key="20">
    <citation type="journal article" date="2012" name="Proc. Natl. Acad. Sci. U.S.A.">
        <title>N-terminal acetylome analyses and functional insights of the N-terminal acetyltransferase NatB.</title>
        <authorList>
            <person name="Van Damme P."/>
            <person name="Lasa M."/>
            <person name="Polevoda B."/>
            <person name="Gazquez C."/>
            <person name="Elosegui-Artola A."/>
            <person name="Kim D.S."/>
            <person name="De Juan-Pardo E."/>
            <person name="Demeyer K."/>
            <person name="Hole K."/>
            <person name="Larrea E."/>
            <person name="Timmerman E."/>
            <person name="Prieto J."/>
            <person name="Arnesen T."/>
            <person name="Sherman F."/>
            <person name="Gevaert K."/>
            <person name="Aldabe R."/>
        </authorList>
    </citation>
    <scope>ACETYLATION [LARGE SCALE ANALYSIS] AT ALA-2</scope>
    <scope>CLEAVAGE OF INITIATOR METHIONINE [LARGE SCALE ANALYSIS]</scope>
    <scope>IDENTIFICATION BY MASS SPECTROMETRY [LARGE SCALE ANALYSIS]</scope>
</reference>
<reference key="21">
    <citation type="journal article" date="2016" name="Sci. Rep.">
        <title>NECAB3 promotes activation of hypoxia-inducible factor-1 during normoxia and enhances tumourigenicity of cancer cells.</title>
        <authorList>
            <person name="Nakaoka H.J."/>
            <person name="Hara T."/>
            <person name="Yoshino S."/>
            <person name="Kanamori A."/>
            <person name="Matsui Y."/>
            <person name="Shimamura T."/>
            <person name="Sato H."/>
            <person name="Murakami Y."/>
            <person name="Seiki M."/>
            <person name="Sakamoto T."/>
        </authorList>
    </citation>
    <scope>INTERACTION WITH NECAB3</scope>
</reference>
<reference key="22">
    <citation type="journal article" date="2002" name="Proc. Natl. Acad. Sci. U.S.A.">
        <title>Structure of factor-inhibiting hypoxia-inducible factor 1: an asparaginyl hydroxylase involved in the hypoxic response pathway.</title>
        <authorList>
            <person name="Dann C.E. III"/>
            <person name="Bruick R.K."/>
            <person name="Deisenhofer J."/>
        </authorList>
    </citation>
    <scope>X-RAY CRYSTALLOGRAPHY (2.2 ANGSTROMS) IN COMPLEX WITH IRON AND 2-OXOGLUTARATE</scope>
    <scope>SUBUNIT</scope>
</reference>
<reference key="23">
    <citation type="journal article" date="2003" name="J. Biol. Chem.">
        <title>Structure of factor-inhibiting hypoxia-inducible factor (HIF) reveals mechanism of oxidative modification of HIF-1 alpha.</title>
        <authorList>
            <person name="Elkins J.M."/>
            <person name="Hewitson K.S."/>
            <person name="McNeill L.A."/>
            <person name="Seibel J.F."/>
            <person name="Schlemminger I."/>
            <person name="Pugh C.W."/>
            <person name="Ratcliffe P.J."/>
            <person name="Schofield C.J."/>
        </authorList>
    </citation>
    <scope>X-RAY CRYSTALLOGRAPHY (2.15 ANGSTROMS) IN COMPLEX WITH 786-826 OF HIF1A; IRON; ZINC AND 2-OXOGLUTARATE</scope>
</reference>
<reference key="24">
    <citation type="journal article" date="2003" name="J. Biol. Chem.">
        <title>Structure of human FIH-1 reveals a unique active site pocket and interaction sites for HIF-1 and von Hippel-Lindau.</title>
        <authorList>
            <person name="Lee C."/>
            <person name="Kim S.J."/>
            <person name="Jeong D.G."/>
            <person name="Lee S.M."/>
            <person name="Ryu S.E."/>
        </authorList>
    </citation>
    <scope>X-RAY CRYSTALLOGRAPHY (2.80 ANGSTROMS)</scope>
    <scope>SUBUNIT</scope>
</reference>
<reference key="25">
    <citation type="journal article" date="2005" name="J. Am. Chem. Soc.">
        <title>Selective inhibition of factor inhibiting hypoxia-inducible factor.</title>
        <authorList>
            <person name="McDonough M.A."/>
            <person name="McNeill L.A."/>
            <person name="Tilliet M."/>
            <person name="Papamicael C.A."/>
            <person name="Chen Q.Y."/>
            <person name="Banerji B."/>
            <person name="Hewitson K.S."/>
            <person name="Schofield C.J."/>
        </authorList>
    </citation>
    <scope>X-RAY CRYSTALLOGRAPHY (2.70 ANGSTROMS) IN COMPLEX WITH IRON AND INHIBITOR</scope>
</reference>
<reference key="26">
    <citation type="journal article" date="2007" name="J. Biol. Chem.">
        <title>Structural and mechanistic studies on the inhibition of the hypoxia-inducible transcription factor hydroxylases by tricarboxylic acid cycle intermediates.</title>
        <authorList>
            <person name="Hewitson K.S."/>
            <person name="Lienard B.M."/>
            <person name="McDonough M.A."/>
            <person name="Clifton I.J."/>
            <person name="Butler D."/>
            <person name="Soares A.S."/>
            <person name="Oldham N.J."/>
            <person name="McNeill L.A."/>
            <person name="Schofield C.J."/>
        </authorList>
    </citation>
    <scope>X-RAY CRYSTALLOGRAPHY (2.30 ANGSTROMS) IN COMPLEX WITH IRON; SUCCINATE AND FUMARATE</scope>
</reference>
<reference key="27">
    <citation type="journal article" date="2007" name="J. Biol. Chem.">
        <title>Asparaginyl hydroxylation of the Notch ankyrin repeat domain by factor inhibiting hypoxia-inducible factor.</title>
        <authorList>
            <person name="Coleman M.L."/>
            <person name="McDonough M.A."/>
            <person name="Hewitson K.S."/>
            <person name="Coles C."/>
            <person name="Mecinovic J."/>
            <person name="Edelmann M."/>
            <person name="Cook K.M."/>
            <person name="Cockman M.E."/>
            <person name="Lancaster D.E."/>
            <person name="Kessler B.M."/>
            <person name="Oldham N.J."/>
            <person name="Ratcliffe P.J."/>
            <person name="Schofield C.J."/>
        </authorList>
    </citation>
    <scope>X-RAY CRYSTALLOGRAPHY (2.40 ANGSTROMS) IN COMPLEXES WITH 1930-1949 OR 1997-2016 OF MOUSE NOTCH1; IRON AND 2-OXOGLUTARATE</scope>
    <scope>FUNCTION</scope>
    <scope>SUBUNIT</scope>
    <scope>CATALYTIC ACTIVITY</scope>
</reference>
<reference key="28">
    <citation type="journal article" date="2008" name="J. Biol. Chem.">
        <title>Evidence that two enzyme-derived histidine ligands are sufficient for iron binding and catalysis by factor inhibiting HIF (FIH).</title>
        <authorList>
            <person name="Hewitson K.S."/>
            <person name="Holmes S.L."/>
            <person name="Ehrismann D."/>
            <person name="Hardy A.P."/>
            <person name="Chowdhury R."/>
            <person name="Schofield C.J."/>
            <person name="McDonough M.A."/>
        </authorList>
    </citation>
    <scope>X-RAY CRYSTALLOGRAPHY (2.10 ANGSTROMS) OF 11-349 OF MUTANTS ALA-201 AND GLY-201 IN COMPLEXES WITH 786-826 OR 788-806 OF HIF1A; IRON OR ZINC AND 2-OXOGLUTARATE</scope>
    <scope>MUTAGENESIS OF ASP-201; TRP-296 AND LEU-340</scope>
</reference>
<reference key="29">
    <citation type="journal article" date="2010" name="Bioorg. Med. Chem. Lett.">
        <title>Structural basis for binding of cyclic 2-oxoglutarate analogues to factor-inhibiting hypoxia-inducible factor.</title>
        <authorList>
            <person name="Conejo-Garcia A."/>
            <person name="McDonough M.A."/>
            <person name="Loenarz C."/>
            <person name="McNeill L.A."/>
            <person name="Hewitson K.S."/>
            <person name="Ge W."/>
            <person name="Lienard B.M."/>
            <person name="Schofield C.J."/>
            <person name="Clifton I.J."/>
        </authorList>
    </citation>
    <scope>X-RAY CRYSTALLOGRAPHY (2.12 ANGSTROMS) IN COMPLEX WITH IRON AND 2-OXOGLUTARATE ANALOGS</scope>
</reference>
<reference key="30">
    <citation type="journal article" date="2010" name="Mol. Cells">
        <title>Crystal structures of human FIH-1 in complex with quinol family inhibitors.</title>
        <authorList>
            <person name="Moon H."/>
            <person name="Han S."/>
            <person name="Park H."/>
            <person name="Choe J."/>
        </authorList>
    </citation>
    <scope>X-RAY CRYSTALLOGRAPHY (2.59 ANGSTROMS) OF 15-349 IN COMPLEX WITH IRON AND QUINOL FAMILY INHIBITORS</scope>
</reference>
<reference key="31">
    <citation type="journal article" date="2011" name="EMBO Rep.">
        <title>The oncometabolite 2-hydroxyglutarate inhibits histone lysine demethylases.</title>
        <authorList>
            <person name="Chowdhury R."/>
            <person name="Yeoh K.K."/>
            <person name="Tian Y.M."/>
            <person name="Hillringhaus L."/>
            <person name="Bagg E.A."/>
            <person name="Rose N.R."/>
            <person name="Leung I.K."/>
            <person name="Li X.S."/>
            <person name="Woon E.C."/>
            <person name="Yang M."/>
            <person name="McDonough M.A."/>
            <person name="King O.N."/>
            <person name="Clifton I.J."/>
            <person name="Klose R.J."/>
            <person name="Claridge T.D."/>
            <person name="Ratcliffe P.J."/>
            <person name="Schofield C.J."/>
            <person name="Kawamura A."/>
        </authorList>
    </citation>
    <scope>X-RAY CRYSTALLOGRAPHY (2.15 ANGSTROMS) IN COMPLEX WITH IRON AND INHIBITORS</scope>
</reference>
<reference key="32">
    <citation type="journal article" date="2011" name="FEBS J.">
        <title>Factor-inhibiting hypoxia-inducible factor (FIH) catalyses the post-translational hydroxylation of histidinyl residues within ankyrin repeat domains.</title>
        <authorList>
            <person name="Yang M."/>
            <person name="Chowdhury R."/>
            <person name="Ge W."/>
            <person name="Hamed R.B."/>
            <person name="McDonough M.A."/>
            <person name="Claridge T.D."/>
            <person name="Kessler B.M."/>
            <person name="Cockman M.E."/>
            <person name="Ratcliffe P.J."/>
            <person name="Schofield C.J."/>
        </authorList>
    </citation>
    <scope>X-RAY CRYSTALLOGRAPHY (2.28 ANGSTROMS) IN COMPLEX WITH IRON; 2-OXOGLUTARATE AND 538-558 OF TNKS2</scope>
    <scope>FUNCTION</scope>
    <scope>CATALYTIC ACTIVITY</scope>
</reference>
<reference key="33">
    <citation type="journal article" date="2011" name="J. Biol. Chem.">
        <title>Asparagine and aspartate hydroxylation of the cytoskeletal ankyrin family is catalyzed by factor-inhibiting hypoxia-inducible factor.</title>
        <authorList>
            <person name="Yang M."/>
            <person name="Ge W."/>
            <person name="Chowdhury R."/>
            <person name="Claridge T.D."/>
            <person name="Kramer H.B."/>
            <person name="Schmierer B."/>
            <person name="McDonough M.A."/>
            <person name="Gong L."/>
            <person name="Kessler B.M."/>
            <person name="Ratcliffe P.J."/>
            <person name="Coleman M.L."/>
            <person name="Schofield C.J."/>
        </authorList>
    </citation>
    <scope>X-RAY CRYSTALLOGRAPHY (2.20 ANGSTROMS) OF MUTANT HIS-239 IN COMPLEX WITH ZINC; N-OXALYLGLYCINE AND PEPTIDE SUBSTRATE</scope>
    <scope>FUNCTION</scope>
    <scope>INTERACTION WITH ANK1</scope>
    <scope>MUTAGENESIS OF ASP-201 AND GLN-239</scope>
    <scope>CATALYTIC ACTIVITY</scope>
</reference>
<proteinExistence type="evidence at protein level"/>
<keyword id="KW-0002">3D-structure</keyword>
<keyword id="KW-0007">Acetylation</keyword>
<keyword id="KW-0963">Cytoplasm</keyword>
<keyword id="KW-0223">Dioxygenase</keyword>
<keyword id="KW-0408">Iron</keyword>
<keyword id="KW-0479">Metal-binding</keyword>
<keyword id="KW-0539">Nucleus</keyword>
<keyword id="KW-0560">Oxidoreductase</keyword>
<keyword id="KW-1267">Proteomics identification</keyword>
<keyword id="KW-1185">Reference proteome</keyword>
<keyword id="KW-0804">Transcription</keyword>
<keyword id="KW-0805">Transcription regulation</keyword>
<dbReference type="EC" id="1.14.11.30"/>
<dbReference type="EC" id="1.14.11.n4"/>
<dbReference type="EMBL" id="AF395830">
    <property type="protein sequence ID" value="AAL27308.1"/>
    <property type="molecule type" value="mRNA"/>
</dbReference>
<dbReference type="EMBL" id="AK000622">
    <property type="protein sequence ID" value="BAA91291.1"/>
    <property type="molecule type" value="mRNA"/>
</dbReference>
<dbReference type="EMBL" id="AL133352">
    <property type="status" value="NOT_ANNOTATED_CDS"/>
    <property type="molecule type" value="Genomic_DNA"/>
</dbReference>
<dbReference type="EMBL" id="CH471066">
    <property type="protein sequence ID" value="EAW49817.1"/>
    <property type="molecule type" value="Genomic_DNA"/>
</dbReference>
<dbReference type="EMBL" id="CH471066">
    <property type="protein sequence ID" value="EAW49818.1"/>
    <property type="molecule type" value="Genomic_DNA"/>
</dbReference>
<dbReference type="EMBL" id="BC007719">
    <property type="protein sequence ID" value="AAH07719.1"/>
    <property type="molecule type" value="mRNA"/>
</dbReference>
<dbReference type="EMBL" id="AL359615">
    <property type="protein sequence ID" value="CAB94885.1"/>
    <property type="molecule type" value="mRNA"/>
</dbReference>
<dbReference type="CCDS" id="CCDS7498.1"/>
<dbReference type="PIR" id="T50633">
    <property type="entry name" value="T50633"/>
</dbReference>
<dbReference type="RefSeq" id="NP_060372.2">
    <property type="nucleotide sequence ID" value="NM_017902.3"/>
</dbReference>
<dbReference type="PDB" id="1H2K">
    <property type="method" value="X-ray"/>
    <property type="resolution" value="2.15 A"/>
    <property type="chains" value="A=1-349"/>
</dbReference>
<dbReference type="PDB" id="1H2L">
    <property type="method" value="X-ray"/>
    <property type="resolution" value="2.25 A"/>
    <property type="chains" value="A=1-349"/>
</dbReference>
<dbReference type="PDB" id="1H2M">
    <property type="method" value="X-ray"/>
    <property type="resolution" value="2.50 A"/>
    <property type="chains" value="A=1-349"/>
</dbReference>
<dbReference type="PDB" id="1H2N">
    <property type="method" value="X-ray"/>
    <property type="resolution" value="2.84 A"/>
    <property type="chains" value="A=1-349"/>
</dbReference>
<dbReference type="PDB" id="1IZ3">
    <property type="method" value="X-ray"/>
    <property type="resolution" value="2.80 A"/>
    <property type="chains" value="A=1-349"/>
</dbReference>
<dbReference type="PDB" id="1MZE">
    <property type="method" value="X-ray"/>
    <property type="resolution" value="2.20 A"/>
    <property type="chains" value="A=1-349"/>
</dbReference>
<dbReference type="PDB" id="1MZF">
    <property type="method" value="X-ray"/>
    <property type="resolution" value="2.40 A"/>
    <property type="chains" value="A=1-349"/>
</dbReference>
<dbReference type="PDB" id="1YCI">
    <property type="method" value="X-ray"/>
    <property type="resolution" value="2.70 A"/>
    <property type="chains" value="A=1-349"/>
</dbReference>
<dbReference type="PDB" id="2CGN">
    <property type="method" value="X-ray"/>
    <property type="resolution" value="2.40 A"/>
    <property type="chains" value="A=1-349"/>
</dbReference>
<dbReference type="PDB" id="2CGO">
    <property type="method" value="X-ray"/>
    <property type="resolution" value="2.30 A"/>
    <property type="chains" value="A=1-349"/>
</dbReference>
<dbReference type="PDB" id="2ILM">
    <property type="method" value="X-ray"/>
    <property type="resolution" value="2.30 A"/>
    <property type="chains" value="A=1-349"/>
</dbReference>
<dbReference type="PDB" id="2W0X">
    <property type="method" value="X-ray"/>
    <property type="resolution" value="2.12 A"/>
    <property type="chains" value="A=1-349"/>
</dbReference>
<dbReference type="PDB" id="2WA3">
    <property type="method" value="X-ray"/>
    <property type="resolution" value="2.50 A"/>
    <property type="chains" value="A=1-349"/>
</dbReference>
<dbReference type="PDB" id="2WA4">
    <property type="method" value="X-ray"/>
    <property type="resolution" value="2.50 A"/>
    <property type="chains" value="A=1-349"/>
</dbReference>
<dbReference type="PDB" id="2XUM">
    <property type="method" value="X-ray"/>
    <property type="resolution" value="2.20 A"/>
    <property type="chains" value="A=1-349"/>
</dbReference>
<dbReference type="PDB" id="2Y0I">
    <property type="method" value="X-ray"/>
    <property type="resolution" value="2.28 A"/>
    <property type="chains" value="A=1-349"/>
</dbReference>
<dbReference type="PDB" id="2YC0">
    <property type="method" value="X-ray"/>
    <property type="resolution" value="2.15 A"/>
    <property type="chains" value="A=1-349"/>
</dbReference>
<dbReference type="PDB" id="2YDE">
    <property type="method" value="X-ray"/>
    <property type="resolution" value="2.28 A"/>
    <property type="chains" value="A=1-349"/>
</dbReference>
<dbReference type="PDB" id="3D8C">
    <property type="method" value="X-ray"/>
    <property type="resolution" value="2.10 A"/>
    <property type="chains" value="A=11-349"/>
</dbReference>
<dbReference type="PDB" id="3KCX">
    <property type="method" value="X-ray"/>
    <property type="resolution" value="2.60 A"/>
    <property type="chains" value="A=15-349"/>
</dbReference>
<dbReference type="PDB" id="3KCY">
    <property type="method" value="X-ray"/>
    <property type="resolution" value="2.59 A"/>
    <property type="chains" value="A=15-349"/>
</dbReference>
<dbReference type="PDB" id="3OD4">
    <property type="method" value="X-ray"/>
    <property type="resolution" value="2.20 A"/>
    <property type="chains" value="A=1-349"/>
</dbReference>
<dbReference type="PDB" id="3P3N">
    <property type="method" value="X-ray"/>
    <property type="resolution" value="2.40 A"/>
    <property type="chains" value="A=1-349"/>
</dbReference>
<dbReference type="PDB" id="3P3P">
    <property type="method" value="X-ray"/>
    <property type="resolution" value="2.60 A"/>
    <property type="chains" value="A=1-349"/>
</dbReference>
<dbReference type="PDB" id="4AI8">
    <property type="method" value="X-ray"/>
    <property type="resolution" value="2.40 A"/>
    <property type="chains" value="A=1-349"/>
</dbReference>
<dbReference type="PDB" id="4B7E">
    <property type="method" value="X-ray"/>
    <property type="resolution" value="2.50 A"/>
    <property type="chains" value="A=1-349"/>
</dbReference>
<dbReference type="PDB" id="4B7K">
    <property type="method" value="X-ray"/>
    <property type="resolution" value="2.39 A"/>
    <property type="chains" value="A=1-349"/>
</dbReference>
<dbReference type="PDB" id="4BIO">
    <property type="method" value="X-ray"/>
    <property type="resolution" value="2.45 A"/>
    <property type="chains" value="A=1-349"/>
</dbReference>
<dbReference type="PDB" id="4JAA">
    <property type="method" value="X-ray"/>
    <property type="resolution" value="2.39 A"/>
    <property type="chains" value="A=1-349"/>
</dbReference>
<dbReference type="PDB" id="4NR1">
    <property type="method" value="X-ray"/>
    <property type="resolution" value="2.68 A"/>
    <property type="chains" value="A=1-349"/>
</dbReference>
<dbReference type="PDB" id="4Z1V">
    <property type="method" value="X-ray"/>
    <property type="resolution" value="2.10 A"/>
    <property type="chains" value="A=1-349"/>
</dbReference>
<dbReference type="PDB" id="4Z2W">
    <property type="method" value="X-ray"/>
    <property type="resolution" value="2.50 A"/>
    <property type="chains" value="A=1-349"/>
</dbReference>
<dbReference type="PDB" id="5JWK">
    <property type="method" value="X-ray"/>
    <property type="resolution" value="2.30 A"/>
    <property type="chains" value="A=1-349"/>
</dbReference>
<dbReference type="PDB" id="5JWL">
    <property type="method" value="X-ray"/>
    <property type="resolution" value="2.40 A"/>
    <property type="chains" value="A=1-349"/>
</dbReference>
<dbReference type="PDB" id="5JWP">
    <property type="method" value="X-ray"/>
    <property type="resolution" value="2.10 A"/>
    <property type="chains" value="A=1-349"/>
</dbReference>
<dbReference type="PDB" id="5OP6">
    <property type="method" value="X-ray"/>
    <property type="resolution" value="2.45 A"/>
    <property type="chains" value="A=1-349"/>
</dbReference>
<dbReference type="PDB" id="5OP8">
    <property type="method" value="X-ray"/>
    <property type="resolution" value="2.30 A"/>
    <property type="chains" value="A=1-349"/>
</dbReference>
<dbReference type="PDB" id="5OPC">
    <property type="method" value="X-ray"/>
    <property type="resolution" value="2.30 A"/>
    <property type="chains" value="A=1-349"/>
</dbReference>
<dbReference type="PDB" id="6H9J">
    <property type="method" value="X-ray"/>
    <property type="resolution" value="1.83 A"/>
    <property type="chains" value="A=12-349"/>
</dbReference>
<dbReference type="PDB" id="6HA6">
    <property type="method" value="X-ray"/>
    <property type="resolution" value="1.98 A"/>
    <property type="chains" value="A=1-349"/>
</dbReference>
<dbReference type="PDB" id="6HC8">
    <property type="method" value="X-ray"/>
    <property type="resolution" value="1.90 A"/>
    <property type="chains" value="A=1-349"/>
</dbReference>
<dbReference type="PDB" id="6HKP">
    <property type="method" value="X-ray"/>
    <property type="resolution" value="1.90 A"/>
    <property type="chains" value="A=1-349"/>
</dbReference>
<dbReference type="PDB" id="6HL5">
    <property type="method" value="X-ray"/>
    <property type="resolution" value="1.98 A"/>
    <property type="chains" value="A=1-349"/>
</dbReference>
<dbReference type="PDB" id="6HL6">
    <property type="method" value="X-ray"/>
    <property type="resolution" value="1.97 A"/>
    <property type="chains" value="A=1-349"/>
</dbReference>
<dbReference type="PDB" id="6RUJ">
    <property type="method" value="X-ray"/>
    <property type="resolution" value="2.42 A"/>
    <property type="chains" value="A=1-349"/>
</dbReference>
<dbReference type="PDB" id="7A1J">
    <property type="method" value="X-ray"/>
    <property type="resolution" value="1.90 A"/>
    <property type="chains" value="A=1-349"/>
</dbReference>
<dbReference type="PDB" id="7A1K">
    <property type="method" value="X-ray"/>
    <property type="resolution" value="1.99 A"/>
    <property type="chains" value="A=1-349"/>
</dbReference>
<dbReference type="PDB" id="7A1L">
    <property type="method" value="X-ray"/>
    <property type="resolution" value="2.29 A"/>
    <property type="chains" value="A=1-349"/>
</dbReference>
<dbReference type="PDB" id="7A1M">
    <property type="method" value="X-ray"/>
    <property type="resolution" value="2.18 A"/>
    <property type="chains" value="A=1-349"/>
</dbReference>
<dbReference type="PDB" id="7A1N">
    <property type="method" value="X-ray"/>
    <property type="resolution" value="2.01 A"/>
    <property type="chains" value="A=1-349"/>
</dbReference>
<dbReference type="PDB" id="7A1O">
    <property type="method" value="X-ray"/>
    <property type="resolution" value="2.21 A"/>
    <property type="chains" value="A=1-349"/>
</dbReference>
<dbReference type="PDB" id="7A1P">
    <property type="method" value="X-ray"/>
    <property type="resolution" value="1.76 A"/>
    <property type="chains" value="A=1-349"/>
</dbReference>
<dbReference type="PDB" id="7A1Q">
    <property type="method" value="X-ray"/>
    <property type="resolution" value="1.75 A"/>
    <property type="chains" value="A=1-349"/>
</dbReference>
<dbReference type="PDB" id="7A1S">
    <property type="method" value="X-ray"/>
    <property type="resolution" value="2.01 A"/>
    <property type="chains" value="A=1-349"/>
</dbReference>
<dbReference type="PDB" id="8IHZ">
    <property type="method" value="X-ray"/>
    <property type="resolution" value="2.22 A"/>
    <property type="chains" value="A=1-349"/>
</dbReference>
<dbReference type="PDB" id="8II0">
    <property type="method" value="X-ray"/>
    <property type="resolution" value="2.04 A"/>
    <property type="chains" value="A=1-349"/>
</dbReference>
<dbReference type="PDB" id="8K71">
    <property type="method" value="X-ray"/>
    <property type="resolution" value="2.23 A"/>
    <property type="chains" value="A=1-349"/>
</dbReference>
<dbReference type="PDB" id="8K72">
    <property type="method" value="X-ray"/>
    <property type="resolution" value="2.45 A"/>
    <property type="chains" value="A=1-349"/>
</dbReference>
<dbReference type="PDB" id="8K73">
    <property type="method" value="X-ray"/>
    <property type="resolution" value="2.02 A"/>
    <property type="chains" value="A=1-349"/>
</dbReference>
<dbReference type="PDB" id="9FSN">
    <property type="method" value="X-ray"/>
    <property type="resolution" value="2.20 A"/>
    <property type="chains" value="A=1-349"/>
</dbReference>
<dbReference type="PDB" id="9IIF">
    <property type="method" value="X-ray"/>
    <property type="resolution" value="2.16 A"/>
    <property type="chains" value="A=1-349"/>
</dbReference>
<dbReference type="PDBsum" id="1H2K"/>
<dbReference type="PDBsum" id="1H2L"/>
<dbReference type="PDBsum" id="1H2M"/>
<dbReference type="PDBsum" id="1H2N"/>
<dbReference type="PDBsum" id="1IZ3"/>
<dbReference type="PDBsum" id="1MZE"/>
<dbReference type="PDBsum" id="1MZF"/>
<dbReference type="PDBsum" id="1YCI"/>
<dbReference type="PDBsum" id="2CGN"/>
<dbReference type="PDBsum" id="2CGO"/>
<dbReference type="PDBsum" id="2ILM"/>
<dbReference type="PDBsum" id="2W0X"/>
<dbReference type="PDBsum" id="2WA3"/>
<dbReference type="PDBsum" id="2WA4"/>
<dbReference type="PDBsum" id="2XUM"/>
<dbReference type="PDBsum" id="2Y0I"/>
<dbReference type="PDBsum" id="2YC0"/>
<dbReference type="PDBsum" id="2YDE"/>
<dbReference type="PDBsum" id="3D8C"/>
<dbReference type="PDBsum" id="3KCX"/>
<dbReference type="PDBsum" id="3KCY"/>
<dbReference type="PDBsum" id="3OD4"/>
<dbReference type="PDBsum" id="3P3N"/>
<dbReference type="PDBsum" id="3P3P"/>
<dbReference type="PDBsum" id="4AI8"/>
<dbReference type="PDBsum" id="4B7E"/>
<dbReference type="PDBsum" id="4B7K"/>
<dbReference type="PDBsum" id="4BIO"/>
<dbReference type="PDBsum" id="4JAA"/>
<dbReference type="PDBsum" id="4NR1"/>
<dbReference type="PDBsum" id="4Z1V"/>
<dbReference type="PDBsum" id="4Z2W"/>
<dbReference type="PDBsum" id="5JWK"/>
<dbReference type="PDBsum" id="5JWL"/>
<dbReference type="PDBsum" id="5JWP"/>
<dbReference type="PDBsum" id="5OP6"/>
<dbReference type="PDBsum" id="5OP8"/>
<dbReference type="PDBsum" id="5OPC"/>
<dbReference type="PDBsum" id="6H9J"/>
<dbReference type="PDBsum" id="6HA6"/>
<dbReference type="PDBsum" id="6HC8"/>
<dbReference type="PDBsum" id="6HKP"/>
<dbReference type="PDBsum" id="6HL5"/>
<dbReference type="PDBsum" id="6HL6"/>
<dbReference type="PDBsum" id="6RUJ"/>
<dbReference type="PDBsum" id="7A1J"/>
<dbReference type="PDBsum" id="7A1K"/>
<dbReference type="PDBsum" id="7A1L"/>
<dbReference type="PDBsum" id="7A1M"/>
<dbReference type="PDBsum" id="7A1N"/>
<dbReference type="PDBsum" id="7A1O"/>
<dbReference type="PDBsum" id="7A1P"/>
<dbReference type="PDBsum" id="7A1Q"/>
<dbReference type="PDBsum" id="7A1S"/>
<dbReference type="PDBsum" id="8IHZ"/>
<dbReference type="PDBsum" id="8II0"/>
<dbReference type="PDBsum" id="8K71"/>
<dbReference type="PDBsum" id="8K72"/>
<dbReference type="PDBsum" id="8K73"/>
<dbReference type="PDBsum" id="9FSN"/>
<dbReference type="PDBsum" id="9IIF"/>
<dbReference type="SMR" id="Q9NWT6"/>
<dbReference type="BioGRID" id="120794">
    <property type="interactions" value="319"/>
</dbReference>
<dbReference type="DIP" id="DIP-35527N"/>
<dbReference type="FunCoup" id="Q9NWT6">
    <property type="interactions" value="3464"/>
</dbReference>
<dbReference type="IntAct" id="Q9NWT6">
    <property type="interactions" value="226"/>
</dbReference>
<dbReference type="MINT" id="Q9NWT6"/>
<dbReference type="STRING" id="9606.ENSP00000299163"/>
<dbReference type="BindingDB" id="Q9NWT6"/>
<dbReference type="ChEMBL" id="CHEMBL5909"/>
<dbReference type="DrugBank" id="DB01694">
    <property type="generic name" value="D-tartaric acid"/>
</dbReference>
<dbReference type="DrugBank" id="DB08263">
    <property type="generic name" value="N-(carboxycarbonyl)-D-phenylalanine"/>
</dbReference>
<dbReference type="DrugCentral" id="Q9NWT6"/>
<dbReference type="iPTMnet" id="Q9NWT6"/>
<dbReference type="PhosphoSitePlus" id="Q9NWT6"/>
<dbReference type="BioMuta" id="HIF1AN"/>
<dbReference type="DMDM" id="32129605"/>
<dbReference type="jPOST" id="Q9NWT6"/>
<dbReference type="MassIVE" id="Q9NWT6"/>
<dbReference type="PaxDb" id="9606-ENSP00000299163"/>
<dbReference type="PeptideAtlas" id="Q9NWT6"/>
<dbReference type="ProteomicsDB" id="82978"/>
<dbReference type="Pumba" id="Q9NWT6"/>
<dbReference type="Antibodypedia" id="17685">
    <property type="antibodies" value="636 antibodies from 36 providers"/>
</dbReference>
<dbReference type="DNASU" id="55662"/>
<dbReference type="Ensembl" id="ENST00000299163.7">
    <property type="protein sequence ID" value="ENSP00000299163.4"/>
    <property type="gene ID" value="ENSG00000166135.14"/>
</dbReference>
<dbReference type="GeneID" id="55662"/>
<dbReference type="KEGG" id="hsa:55662"/>
<dbReference type="MANE-Select" id="ENST00000299163.7">
    <property type="protein sequence ID" value="ENSP00000299163.4"/>
    <property type="RefSeq nucleotide sequence ID" value="NM_017902.3"/>
    <property type="RefSeq protein sequence ID" value="NP_060372.2"/>
</dbReference>
<dbReference type="UCSC" id="uc001krj.5">
    <property type="organism name" value="human"/>
</dbReference>
<dbReference type="AGR" id="HGNC:17113"/>
<dbReference type="CTD" id="55662"/>
<dbReference type="DisGeNET" id="55662"/>
<dbReference type="GeneCards" id="HIF1AN"/>
<dbReference type="HGNC" id="HGNC:17113">
    <property type="gene designation" value="HIF1AN"/>
</dbReference>
<dbReference type="HPA" id="ENSG00000166135">
    <property type="expression patterns" value="Tissue enhanced (skeletal muscle, tongue)"/>
</dbReference>
<dbReference type="MIM" id="606615">
    <property type="type" value="gene"/>
</dbReference>
<dbReference type="neXtProt" id="NX_Q9NWT6"/>
<dbReference type="OpenTargets" id="ENSG00000166135"/>
<dbReference type="PharmGKB" id="PA29284"/>
<dbReference type="VEuPathDB" id="HostDB:ENSG00000166135"/>
<dbReference type="eggNOG" id="KOG2132">
    <property type="taxonomic scope" value="Eukaryota"/>
</dbReference>
<dbReference type="GeneTree" id="ENSGT00940000157409"/>
<dbReference type="HOGENOM" id="CLU_016785_3_0_1"/>
<dbReference type="InParanoid" id="Q9NWT6"/>
<dbReference type="OMA" id="QNIVGYE"/>
<dbReference type="OrthoDB" id="47172at2759"/>
<dbReference type="PAN-GO" id="Q9NWT6">
    <property type="GO annotations" value="9 GO annotations based on evolutionary models"/>
</dbReference>
<dbReference type="PhylomeDB" id="Q9NWT6"/>
<dbReference type="TreeFam" id="TF329609"/>
<dbReference type="BioCyc" id="MetaCyc:HS15407-MONOMER"/>
<dbReference type="BRENDA" id="1.14.11.16">
    <property type="organism ID" value="2681"/>
</dbReference>
<dbReference type="BRENDA" id="1.14.11.30">
    <property type="organism ID" value="2681"/>
</dbReference>
<dbReference type="PathwayCommons" id="Q9NWT6"/>
<dbReference type="Reactome" id="R-HSA-1234174">
    <property type="pathway name" value="Cellular response to hypoxia"/>
</dbReference>
<dbReference type="SignaLink" id="Q9NWT6"/>
<dbReference type="SIGNOR" id="Q9NWT6"/>
<dbReference type="BioGRID-ORCS" id="55662">
    <property type="hits" value="35 hits in 1171 CRISPR screens"/>
</dbReference>
<dbReference type="ChiTaRS" id="HIF1AN">
    <property type="organism name" value="human"/>
</dbReference>
<dbReference type="EvolutionaryTrace" id="Q9NWT6"/>
<dbReference type="GeneWiki" id="HIF1AN"/>
<dbReference type="GenomeRNAi" id="55662"/>
<dbReference type="Pharos" id="Q9NWT6">
    <property type="development level" value="Tbio"/>
</dbReference>
<dbReference type="PRO" id="PR:Q9NWT6"/>
<dbReference type="Proteomes" id="UP000005640">
    <property type="component" value="Chromosome 10"/>
</dbReference>
<dbReference type="RNAct" id="Q9NWT6">
    <property type="molecule type" value="protein"/>
</dbReference>
<dbReference type="Bgee" id="ENSG00000166135">
    <property type="expression patterns" value="Expressed in gastrocnemius and 204 other cell types or tissues"/>
</dbReference>
<dbReference type="ExpressionAtlas" id="Q9NWT6">
    <property type="expression patterns" value="baseline and differential"/>
</dbReference>
<dbReference type="GO" id="GO:0005737">
    <property type="term" value="C:cytoplasm"/>
    <property type="evidence" value="ECO:0000314"/>
    <property type="project" value="UniProtKB"/>
</dbReference>
<dbReference type="GO" id="GO:0005829">
    <property type="term" value="C:cytosol"/>
    <property type="evidence" value="ECO:0000314"/>
    <property type="project" value="HPA"/>
</dbReference>
<dbReference type="GO" id="GO:0005654">
    <property type="term" value="C:nucleoplasm"/>
    <property type="evidence" value="ECO:0000314"/>
    <property type="project" value="HPA"/>
</dbReference>
<dbReference type="GO" id="GO:0048471">
    <property type="term" value="C:perinuclear region of cytoplasm"/>
    <property type="evidence" value="ECO:0000314"/>
    <property type="project" value="UniProtKB"/>
</dbReference>
<dbReference type="GO" id="GO:0036140">
    <property type="term" value="F:[protein]-asparagine 3-dioxygenase activity"/>
    <property type="evidence" value="ECO:0000314"/>
    <property type="project" value="UniProtKB"/>
</dbReference>
<dbReference type="GO" id="GO:0071532">
    <property type="term" value="F:ankyrin repeat binding"/>
    <property type="evidence" value="ECO:0000353"/>
    <property type="project" value="UniProtKB"/>
</dbReference>
<dbReference type="GO" id="GO:0031406">
    <property type="term" value="F:carboxylic acid binding"/>
    <property type="evidence" value="ECO:0000314"/>
    <property type="project" value="UniProtKB"/>
</dbReference>
<dbReference type="GO" id="GO:0008198">
    <property type="term" value="F:ferrous iron binding"/>
    <property type="evidence" value="ECO:0000314"/>
    <property type="project" value="UniProtKB"/>
</dbReference>
<dbReference type="GO" id="GO:0051059">
    <property type="term" value="F:NF-kappaB binding"/>
    <property type="evidence" value="ECO:0000353"/>
    <property type="project" value="UniProtKB"/>
</dbReference>
<dbReference type="GO" id="GO:0005112">
    <property type="term" value="F:Notch binding"/>
    <property type="evidence" value="ECO:0000353"/>
    <property type="project" value="UniProtKB"/>
</dbReference>
<dbReference type="GO" id="GO:0019826">
    <property type="term" value="F:oxygen sensor activity"/>
    <property type="evidence" value="ECO:0000303"/>
    <property type="project" value="UniProtKB"/>
</dbReference>
<dbReference type="GO" id="GO:0062101">
    <property type="term" value="F:peptidyl-aspartic acid 3-dioxygenase activity"/>
    <property type="evidence" value="ECO:0000314"/>
    <property type="project" value="UniProtKB"/>
</dbReference>
<dbReference type="GO" id="GO:0036139">
    <property type="term" value="F:peptidyl-histidine dioxygenase activity"/>
    <property type="evidence" value="ECO:0000314"/>
    <property type="project" value="UniProtKB"/>
</dbReference>
<dbReference type="GO" id="GO:0042803">
    <property type="term" value="F:protein homodimerization activity"/>
    <property type="evidence" value="ECO:0000314"/>
    <property type="project" value="UniProtKB"/>
</dbReference>
<dbReference type="GO" id="GO:0061629">
    <property type="term" value="F:RNA polymerase II-specific DNA-binding transcription factor binding"/>
    <property type="evidence" value="ECO:0000353"/>
    <property type="project" value="BHF-UCL"/>
</dbReference>
<dbReference type="GO" id="GO:0003714">
    <property type="term" value="F:transcription corepressor activity"/>
    <property type="evidence" value="ECO:0000314"/>
    <property type="project" value="UniProtKB"/>
</dbReference>
<dbReference type="GO" id="GO:0008270">
    <property type="term" value="F:zinc ion binding"/>
    <property type="evidence" value="ECO:0000314"/>
    <property type="project" value="UniProtKB"/>
</dbReference>
<dbReference type="GO" id="GO:0045746">
    <property type="term" value="P:negative regulation of Notch signaling pathway"/>
    <property type="evidence" value="ECO:0000314"/>
    <property type="project" value="UniProtKB"/>
</dbReference>
<dbReference type="GO" id="GO:0000122">
    <property type="term" value="P:negative regulation of transcription by RNA polymerase II"/>
    <property type="evidence" value="ECO:0000314"/>
    <property type="project" value="BHF-UCL"/>
</dbReference>
<dbReference type="GO" id="GO:0045663">
    <property type="term" value="P:positive regulation of myoblast differentiation"/>
    <property type="evidence" value="ECO:0000315"/>
    <property type="project" value="UniProtKB"/>
</dbReference>
<dbReference type="GO" id="GO:2001214">
    <property type="term" value="P:positive regulation of vasculogenesis"/>
    <property type="evidence" value="ECO:0000303"/>
    <property type="project" value="UniProtKB"/>
</dbReference>
<dbReference type="GO" id="GO:0030947">
    <property type="term" value="P:regulation of vascular endothelial growth factor receptor signaling pathway"/>
    <property type="evidence" value="ECO:0000318"/>
    <property type="project" value="GO_Central"/>
</dbReference>
<dbReference type="FunFam" id="1.10.287.1010:FF:000001">
    <property type="entry name" value="Hypoxia-inducible factor 1-alpha inhibitor"/>
    <property type="match status" value="1"/>
</dbReference>
<dbReference type="FunFam" id="2.60.120.10:FF:000042">
    <property type="entry name" value="Hypoxia-inducible factor 1-alpha inhibitor"/>
    <property type="match status" value="1"/>
</dbReference>
<dbReference type="Gene3D" id="1.10.287.1010">
    <property type="entry name" value="Clavaminate synthase-like"/>
    <property type="match status" value="1"/>
</dbReference>
<dbReference type="Gene3D" id="2.60.120.10">
    <property type="entry name" value="Jelly Rolls"/>
    <property type="match status" value="1"/>
</dbReference>
<dbReference type="IDEAL" id="IID00396"/>
<dbReference type="InterPro" id="IPR041667">
    <property type="entry name" value="Cupin_8"/>
</dbReference>
<dbReference type="InterPro" id="IPR027452">
    <property type="entry name" value="FIH-1_dom_II"/>
</dbReference>
<dbReference type="InterPro" id="IPR003347">
    <property type="entry name" value="JmjC_dom"/>
</dbReference>
<dbReference type="InterPro" id="IPR014710">
    <property type="entry name" value="RmlC-like_jellyroll"/>
</dbReference>
<dbReference type="PANTHER" id="PTHR12461">
    <property type="entry name" value="HYPOXIA-INDUCIBLE FACTOR 1 ALPHA INHIBITOR-RELATED"/>
    <property type="match status" value="1"/>
</dbReference>
<dbReference type="PANTHER" id="PTHR12461:SF105">
    <property type="entry name" value="HYPOXIA-INDUCIBLE FACTOR 1-ALPHA INHIBITOR"/>
    <property type="match status" value="1"/>
</dbReference>
<dbReference type="Pfam" id="PF13621">
    <property type="entry name" value="Cupin_8"/>
    <property type="match status" value="1"/>
</dbReference>
<dbReference type="SMART" id="SM00558">
    <property type="entry name" value="JmjC"/>
    <property type="match status" value="1"/>
</dbReference>
<dbReference type="SUPFAM" id="SSF51197">
    <property type="entry name" value="Clavaminate synthase-like"/>
    <property type="match status" value="1"/>
</dbReference>
<dbReference type="PROSITE" id="PS51184">
    <property type="entry name" value="JMJC"/>
    <property type="match status" value="1"/>
</dbReference>
<sequence>MAATAAEAVASGSGEPREEAGALGPAWDESQLRSYSFPTRPIPRLSQSDPRAEELIENEEPVVLTDTNLVYPALKWDLEYLQENIGNGDFSVYSASTHKFLYYDEKKMANFQNFKPRSNREEMKFHEFVEKLQDIQQRGGEERLYLQQTLNDTVGRKIVMDFLGFNWNWINKQQGKRGWGQLTSNLLLIGMEGNVTPAHYDEQQNFFAQIKGYKRCILFPPDQFECLYPYPVHHPCDRQSQVDFDNPDYERFPNFQNVVGYETVVGPGDVLYIPMYWWHHIESLLNGGITITVNFWYKGAPTPKRIEYPLKAHQKVAIMRNIEKMLGEALGNPQEVGPLLNTMIKGRYN</sequence>
<comment type="function">
    <text evidence="5 6 13 15 16 18 22 23">Hydroxylates HIF-1 alpha at 'Asn-803' in the C-terminal transactivation domain (CAD). Functions as an oxygen sensor and, under normoxic conditions, the hydroxylation prevents interaction of HIF-1 with transcriptional coactivators including Cbp/p300-interacting transactivator. Involved in transcriptional repression through interaction with HIF1A, VHL and histone deacetylases. Hydroxylates specific Asn residues within ankyrin repeat domains (ARD) of NFKB1, NFKBIA, NOTCH1, ASB4, PPP1R12A and several other ARD-containing proteins. Also hydroxylates Asp and His residues within ARDs of ANK1 and TNKS2, respectively. Negatively regulates NOTCH1 activity, accelerating myogenic differentiation. Positively regulates ASB4 activity, promoting vascular differentiation.</text>
</comment>
<comment type="catalytic activity">
    <reaction evidence="5 6 10 15">
        <text>L-asparaginyl-[hypoxia-inducible factor alpha subunit] + 2-oxoglutarate + O2 = (3S)-3-hydroxy-L-asparaginyl-[hypoxia-inducible factor alpha subunit] + succinate + CO2</text>
        <dbReference type="Rhea" id="RHEA:54268"/>
        <dbReference type="Rhea" id="RHEA-COMP:13833"/>
        <dbReference type="Rhea" id="RHEA-COMP:13834"/>
        <dbReference type="ChEBI" id="CHEBI:15379"/>
        <dbReference type="ChEBI" id="CHEBI:16526"/>
        <dbReference type="ChEBI" id="CHEBI:16810"/>
        <dbReference type="ChEBI" id="CHEBI:30031"/>
        <dbReference type="ChEBI" id="CHEBI:50347"/>
        <dbReference type="ChEBI" id="CHEBI:138107"/>
        <dbReference type="EC" id="1.14.11.30"/>
    </reaction>
</comment>
<comment type="catalytic activity">
    <reaction evidence="23">
        <text>L-histidyl-[ankyrin-repeat domain protein] + 2-oxoglutarate + O2 = (3S)-3-hydroxy-L-histidyl-[ankyrin-repeat domain protein] + succinate + CO2</text>
        <dbReference type="Rhea" id="RHEA:54264"/>
        <dbReference type="Rhea" id="RHEA-COMP:13836"/>
        <dbReference type="Rhea" id="RHEA-COMP:13837"/>
        <dbReference type="ChEBI" id="CHEBI:15379"/>
        <dbReference type="ChEBI" id="CHEBI:16526"/>
        <dbReference type="ChEBI" id="CHEBI:16810"/>
        <dbReference type="ChEBI" id="CHEBI:29979"/>
        <dbReference type="ChEBI" id="CHEBI:30031"/>
        <dbReference type="ChEBI" id="CHEBI:138021"/>
        <dbReference type="EC" id="1.14.11.n4"/>
    </reaction>
</comment>
<comment type="catalytic activity">
    <reaction evidence="13 15 16 18 22">
        <text>L-asparaginyl-[ankyrin-repeat domain protein] + 2-oxoglutarate + O2 = (3S)-3-hydroxy-L-asparaginyl-[ankyrin-repeat domain protein] + succinate + CO2</text>
        <dbReference type="Rhea" id="RHEA:54272"/>
        <dbReference type="Rhea" id="RHEA-COMP:13838"/>
        <dbReference type="Rhea" id="RHEA-COMP:13839"/>
        <dbReference type="ChEBI" id="CHEBI:15379"/>
        <dbReference type="ChEBI" id="CHEBI:16526"/>
        <dbReference type="ChEBI" id="CHEBI:16810"/>
        <dbReference type="ChEBI" id="CHEBI:30031"/>
        <dbReference type="ChEBI" id="CHEBI:50347"/>
        <dbReference type="ChEBI" id="CHEBI:138107"/>
        <dbReference type="EC" id="1.14.11.n4"/>
    </reaction>
</comment>
<comment type="catalytic activity">
    <reaction evidence="22">
        <text>L-aspartyl-[ankyrin-repeat domain protein] + 2-oxoglutarate + O2 = (3S)-3-hydroxy-L-aspartyl-[ankyrin-repeat domain protein] + succinate + CO2</text>
        <dbReference type="Rhea" id="RHEA:54280"/>
        <dbReference type="Rhea" id="RHEA-COMP:13843"/>
        <dbReference type="Rhea" id="RHEA-COMP:13844"/>
        <dbReference type="ChEBI" id="CHEBI:15379"/>
        <dbReference type="ChEBI" id="CHEBI:16526"/>
        <dbReference type="ChEBI" id="CHEBI:16810"/>
        <dbReference type="ChEBI" id="CHEBI:29961"/>
        <dbReference type="ChEBI" id="CHEBI:30031"/>
        <dbReference type="ChEBI" id="CHEBI:138111"/>
        <dbReference type="EC" id="1.14.11.n4"/>
    </reaction>
</comment>
<comment type="cofactor">
    <cofactor evidence="7 8 12 14 20 21 23 24">
        <name>Fe(2+)</name>
        <dbReference type="ChEBI" id="CHEBI:29033"/>
    </cofactor>
</comment>
<comment type="biophysicochemical properties">
    <kinetics>
        <KM evidence="10">100 uM for HIF1A (788-822) peptide</KM>
        <KM evidence="10">160 uM for HIF2A (832-866) peptide</KM>
        <KM evidence="10">0.5 uM for Fe(2+)</KM>
        <KM evidence="10">25 uM for 2-oxoglutarate</KM>
        <KM evidence="10">260 uM for ascorbate</KM>
        <KM evidence="10">90 uM for O(2)</KM>
        <text>The kinetic constants are determined for the recombinant FLAG-His-tagged protein.</text>
    </kinetics>
</comment>
<comment type="subunit">
    <text evidence="1 4 7 8 9 10 12 13 14 15 18 19 20 21 22 23 24 25 26">Homodimer; homodimerization is essential for catalytic activity. Interacts with VHL and HIF1A. Part of a complex with VHL, HIF1A and HDAC1 or HDAC2 or HDAC3. Interacts with NFKB1 and NFKBIA. Interacts with NOTCH1, NOTCH2 and NOTCH3 but not with NOTCH4. Interacts with APBA3; binding inhibits HIF1AN binding to HIF1A. Interacts with TNKS2. Interacts with PPP1R12A. Interacts with ASB4 (By similarity). Interacts with UBE3A. Interacts with ANKS3 (By similarity). Interacts with NECAB3; the interaction is indirect and seems to be mediated by APBA3.</text>
</comment>
<comment type="interaction">
    <interactant intactId="EBI-745632">
        <id>Q9NWT6</id>
    </interactant>
    <interactant intactId="EBI-11337191">
        <id>Q495B1</id>
        <label>ANKDD1A</label>
    </interactant>
    <organismsDiffer>false</organismsDiffer>
    <experiments>2</experiments>
</comment>
<comment type="interaction">
    <interactant intactId="EBI-745632">
        <id>Q9NWT6</id>
    </interactant>
    <interactant intactId="EBI-13280688">
        <id>Q8NFD2</id>
        <label>ANKK1</label>
    </interactant>
    <organismsDiffer>false</organismsDiffer>
    <experiments>6</experiments>
</comment>
<comment type="interaction">
    <interactant intactId="EBI-745632">
        <id>Q9NWT6</id>
    </interactant>
    <interactant intactId="EBI-12304341">
        <id>Q6PG48</id>
        <label>ANKRD12</label>
    </interactant>
    <organismsDiffer>false</organismsDiffer>
    <experiments>3</experiments>
</comment>
<comment type="interaction">
    <interactant intactId="EBI-745632">
        <id>Q9NWT6</id>
    </interactant>
    <interactant intactId="EBI-12373689">
        <id>Q7Z713</id>
        <label>ANKRD37</label>
    </interactant>
    <organismsDiffer>false</organismsDiffer>
    <experiments>7</experiments>
</comment>
<comment type="interaction">
    <interactant intactId="EBI-745632">
        <id>Q9NWT6</id>
    </interactant>
    <interactant intactId="EBI-9381820">
        <id>Q8WVL7</id>
        <label>ANKRD49</label>
    </interactant>
    <organismsDiffer>false</organismsDiffer>
    <experiments>7</experiments>
</comment>
<comment type="interaction">
    <interactant intactId="EBI-745632">
        <id>Q9NWT6</id>
    </interactant>
    <interactant intactId="EBI-12239063">
        <id>Q9ULJ7-2</id>
        <label>ANKRD50</label>
    </interactant>
    <organismsDiffer>false</organismsDiffer>
    <experiments>3</experiments>
</comment>
<comment type="interaction">
    <interactant intactId="EBI-745632">
        <id>Q9NWT6</id>
    </interactant>
    <interactant intactId="EBI-6115839">
        <id>O96018</id>
        <label>APBA3</label>
    </interactant>
    <organismsDiffer>false</organismsDiffer>
    <experiments>10</experiments>
</comment>
<comment type="interaction">
    <interactant intactId="EBI-745632">
        <id>Q9NWT6</id>
    </interactant>
    <interactant intactId="EBI-707573">
        <id>Q8WXK3</id>
        <label>ASB13</label>
    </interactant>
    <organismsDiffer>false</organismsDiffer>
    <experiments>4</experiments>
</comment>
<comment type="interaction">
    <interactant intactId="EBI-745632">
        <id>Q9NWT6</id>
    </interactant>
    <interactant intactId="EBI-12104328">
        <id>Q9H672-2</id>
        <label>ASB7</label>
    </interactant>
    <organismsDiffer>false</organismsDiffer>
    <experiments>3</experiments>
</comment>
<comment type="interaction">
    <interactant intactId="EBI-745632">
        <id>Q9NWT6</id>
    </interactant>
    <interactant intactId="EBI-745641">
        <id>Q96DX5</id>
        <label>ASB9</label>
    </interactant>
    <organismsDiffer>false</organismsDiffer>
    <experiments>7</experiments>
</comment>
<comment type="interaction">
    <interactant intactId="EBI-745632">
        <id>Q9NWT6</id>
    </interactant>
    <interactant intactId="EBI-310482">
        <id>Q9UK73</id>
        <label>FEM1B</label>
    </interactant>
    <organismsDiffer>false</organismsDiffer>
    <experiments>3</experiments>
</comment>
<comment type="interaction">
    <interactant intactId="EBI-745632">
        <id>Q9NWT6</id>
    </interactant>
    <interactant intactId="EBI-447269">
        <id>Q16665</id>
        <label>HIF1A</label>
    </interactant>
    <organismsDiffer>false</organismsDiffer>
    <experiments>12</experiments>
</comment>
<comment type="interaction">
    <interactant intactId="EBI-745632">
        <id>Q9NWT6</id>
    </interactant>
    <interactant intactId="EBI-747644">
        <id>Q13418</id>
        <label>ILK</label>
    </interactant>
    <organismsDiffer>false</organismsDiffer>
    <experiments>2</experiments>
</comment>
<comment type="interaction">
    <interactant intactId="EBI-745632">
        <id>Q9NWT6</id>
    </interactant>
    <interactant intactId="EBI-300010">
        <id>P19838</id>
        <label>NFKB1</label>
    </interactant>
    <organismsDiffer>false</organismsDiffer>
    <experiments>7</experiments>
</comment>
<comment type="interaction">
    <interactant intactId="EBI-745632">
        <id>Q9NWT6</id>
    </interactant>
    <interactant intactId="EBI-307386">
        <id>P25963</id>
        <label>NFKBIA</label>
    </interactant>
    <organismsDiffer>false</organismsDiffer>
    <experiments>7</experiments>
</comment>
<comment type="interaction">
    <interactant intactId="EBI-745632">
        <id>Q9NWT6</id>
    </interactant>
    <interactant intactId="EBI-1058491">
        <id>Q96FW1</id>
        <label>OTUB1</label>
    </interactant>
    <organismsDiffer>false</organismsDiffer>
    <experiments>7</experiments>
</comment>
<comment type="interaction">
    <interactant intactId="EBI-745632">
        <id>Q9NWT6</id>
    </interactant>
    <interactant intactId="EBI-752185">
        <id>O75832</id>
        <label>PSMD10</label>
    </interactant>
    <organismsDiffer>false</organismsDiffer>
    <experiments>2</experiments>
</comment>
<comment type="interaction">
    <interactant intactId="EBI-745632">
        <id>Q9NWT6</id>
    </interactant>
    <interactant intactId="EBI-4422308">
        <id>P57078</id>
        <label>RIPK4</label>
    </interactant>
    <organismsDiffer>false</organismsDiffer>
    <experiments>4</experiments>
</comment>
<comment type="interaction">
    <interactant intactId="EBI-745632">
        <id>Q9NWT6</id>
    </interactant>
    <interactant intactId="EBI-1105254">
        <id>O95271</id>
        <label>TNKS</label>
    </interactant>
    <organismsDiffer>false</organismsDiffer>
    <experiments>7</experiments>
</comment>
<comment type="interaction">
    <interactant intactId="EBI-745632">
        <id>Q9NWT6</id>
    </interactant>
    <interactant intactId="EBI-4398527">
        <id>Q9H2K2</id>
        <label>TNKS2</label>
    </interactant>
    <organismsDiffer>false</organismsDiffer>
    <experiments>8</experiments>
</comment>
<comment type="interaction">
    <interactant intactId="EBI-745632">
        <id>Q9NWT6</id>
    </interactant>
    <interactant intactId="EBI-350510">
        <id>Q9BZF9</id>
        <label>UACA</label>
    </interactant>
    <organismsDiffer>false</organismsDiffer>
    <experiments>2</experiments>
</comment>
<comment type="subcellular location">
    <subcellularLocation>
        <location>Nucleus</location>
    </subcellularLocation>
    <subcellularLocation>
        <location>Cytoplasm</location>
    </subcellularLocation>
    <subcellularLocation>
        <location>Cytoplasm</location>
        <location>Perinuclear region</location>
    </subcellularLocation>
    <text>Mainly cytoplasmic localization, but interaction with NOTCH1 results in nuclear localization and interaction with ABPA3 results in perinuclear localization in macrophages.</text>
</comment>
<comment type="mass spectrometry"/>
<name>HIF1N_HUMAN</name>
<evidence type="ECO:0000250" key="1">
    <source>
        <dbReference type="UniProtKB" id="Q8BLR9"/>
    </source>
</evidence>
<evidence type="ECO:0000255" key="2">
    <source>
        <dbReference type="PROSITE-ProRule" id="PRU00538"/>
    </source>
</evidence>
<evidence type="ECO:0000256" key="3">
    <source>
        <dbReference type="SAM" id="MobiDB-lite"/>
    </source>
</evidence>
<evidence type="ECO:0000269" key="4">
    <source>
    </source>
</evidence>
<evidence type="ECO:0000269" key="5">
    <source>
    </source>
</evidence>
<evidence type="ECO:0000269" key="6">
    <source>
    </source>
</evidence>
<evidence type="ECO:0000269" key="7">
    <source>
    </source>
</evidence>
<evidence type="ECO:0000269" key="8">
    <source>
    </source>
</evidence>
<evidence type="ECO:0000269" key="9">
    <source>
    </source>
</evidence>
<evidence type="ECO:0000269" key="10">
    <source>
    </source>
</evidence>
<evidence type="ECO:0000269" key="11">
    <source>
    </source>
</evidence>
<evidence type="ECO:0000269" key="12">
    <source>
    </source>
</evidence>
<evidence type="ECO:0000269" key="13">
    <source>
    </source>
</evidence>
<evidence type="ECO:0000269" key="14">
    <source>
    </source>
</evidence>
<evidence type="ECO:0000269" key="15">
    <source>
    </source>
</evidence>
<evidence type="ECO:0000269" key="16">
    <source>
    </source>
</evidence>
<evidence type="ECO:0000269" key="17">
    <source>
    </source>
</evidence>
<evidence type="ECO:0000269" key="18">
    <source>
    </source>
</evidence>
<evidence type="ECO:0000269" key="19">
    <source>
    </source>
</evidence>
<evidence type="ECO:0000269" key="20">
    <source>
    </source>
</evidence>
<evidence type="ECO:0000269" key="21">
    <source>
    </source>
</evidence>
<evidence type="ECO:0000269" key="22">
    <source>
    </source>
</evidence>
<evidence type="ECO:0000269" key="23">
    <source>
    </source>
</evidence>
<evidence type="ECO:0000269" key="24">
    <source>
    </source>
</evidence>
<evidence type="ECO:0000269" key="25">
    <source>
    </source>
</evidence>
<evidence type="ECO:0000269" key="26">
    <source>
    </source>
</evidence>
<evidence type="ECO:0000269" key="27">
    <source ref="4"/>
</evidence>
<evidence type="ECO:0000305" key="28"/>
<evidence type="ECO:0007744" key="29">
    <source>
    </source>
</evidence>
<evidence type="ECO:0007744" key="30">
    <source>
    </source>
</evidence>
<evidence type="ECO:0007744" key="31">
    <source>
    </source>
</evidence>
<evidence type="ECO:0007829" key="32">
    <source>
        <dbReference type="PDB" id="1MZE"/>
    </source>
</evidence>
<evidence type="ECO:0007829" key="33">
    <source>
        <dbReference type="PDB" id="2YC0"/>
    </source>
</evidence>
<evidence type="ECO:0007829" key="34">
    <source>
        <dbReference type="PDB" id="3KCY"/>
    </source>
</evidence>
<evidence type="ECO:0007829" key="35">
    <source>
        <dbReference type="PDB" id="3P3P"/>
    </source>
</evidence>
<evidence type="ECO:0007829" key="36">
    <source>
        <dbReference type="PDB" id="4Z1V"/>
    </source>
</evidence>
<evidence type="ECO:0007829" key="37">
    <source>
        <dbReference type="PDB" id="6HL5"/>
    </source>
</evidence>
<evidence type="ECO:0007829" key="38">
    <source>
        <dbReference type="PDB" id="7A1P"/>
    </source>
</evidence>
<evidence type="ECO:0007829" key="39">
    <source>
        <dbReference type="PDB" id="7A1Q"/>
    </source>
</evidence>